<organism>
    <name type="scientific">Borrelia recurrentis (strain A1)</name>
    <dbReference type="NCBI Taxonomy" id="412418"/>
    <lineage>
        <taxon>Bacteria</taxon>
        <taxon>Pseudomonadati</taxon>
        <taxon>Spirochaetota</taxon>
        <taxon>Spirochaetia</taxon>
        <taxon>Spirochaetales</taxon>
        <taxon>Borreliaceae</taxon>
        <taxon>Borrelia</taxon>
    </lineage>
</organism>
<reference key="1">
    <citation type="journal article" date="2008" name="PLoS Genet.">
        <title>The genome of Borrelia recurrentis, the agent of deadly louse-borne relapsing fever, is a degraded subset of tick-borne Borrelia duttonii.</title>
        <authorList>
            <person name="Lescot M."/>
            <person name="Audic S."/>
            <person name="Robert C."/>
            <person name="Nguyen T.T."/>
            <person name="Blanc G."/>
            <person name="Cutler S.J."/>
            <person name="Wincker P."/>
            <person name="Couloux A."/>
            <person name="Claverie J.-M."/>
            <person name="Raoult D."/>
            <person name="Drancourt M."/>
        </authorList>
    </citation>
    <scope>NUCLEOTIDE SEQUENCE [LARGE SCALE GENOMIC DNA]</scope>
    <source>
        <strain>A1</strain>
    </source>
</reference>
<evidence type="ECO:0000255" key="1">
    <source>
        <dbReference type="HAMAP-Rule" id="MF_00121"/>
    </source>
</evidence>
<keyword id="KW-0067">ATP-binding</keyword>
<keyword id="KW-0436">Ligase</keyword>
<keyword id="KW-0547">Nucleotide-binding</keyword>
<keyword id="KW-0648">Protein biosynthesis</keyword>
<protein>
    <recommendedName>
        <fullName evidence="1">Aspartyl/glutamyl-tRNA(Asn/Gln) amidotransferase subunit B</fullName>
        <shortName evidence="1">Asp/Glu-ADT subunit B</shortName>
        <ecNumber evidence="1">6.3.5.-</ecNumber>
    </recommendedName>
</protein>
<name>GATB_BORRA</name>
<comment type="function">
    <text evidence="1">Allows the formation of correctly charged Asn-tRNA(Asn) or Gln-tRNA(Gln) through the transamidation of misacylated Asp-tRNA(Asn) or Glu-tRNA(Gln) in organisms which lack either or both of asparaginyl-tRNA or glutaminyl-tRNA synthetases. The reaction takes place in the presence of glutamine and ATP through an activated phospho-Asp-tRNA(Asn) or phospho-Glu-tRNA(Gln).</text>
</comment>
<comment type="catalytic activity">
    <reaction evidence="1">
        <text>L-glutamyl-tRNA(Gln) + L-glutamine + ATP + H2O = L-glutaminyl-tRNA(Gln) + L-glutamate + ADP + phosphate + H(+)</text>
        <dbReference type="Rhea" id="RHEA:17521"/>
        <dbReference type="Rhea" id="RHEA-COMP:9681"/>
        <dbReference type="Rhea" id="RHEA-COMP:9684"/>
        <dbReference type="ChEBI" id="CHEBI:15377"/>
        <dbReference type="ChEBI" id="CHEBI:15378"/>
        <dbReference type="ChEBI" id="CHEBI:29985"/>
        <dbReference type="ChEBI" id="CHEBI:30616"/>
        <dbReference type="ChEBI" id="CHEBI:43474"/>
        <dbReference type="ChEBI" id="CHEBI:58359"/>
        <dbReference type="ChEBI" id="CHEBI:78520"/>
        <dbReference type="ChEBI" id="CHEBI:78521"/>
        <dbReference type="ChEBI" id="CHEBI:456216"/>
    </reaction>
</comment>
<comment type="catalytic activity">
    <reaction evidence="1">
        <text>L-aspartyl-tRNA(Asn) + L-glutamine + ATP + H2O = L-asparaginyl-tRNA(Asn) + L-glutamate + ADP + phosphate + 2 H(+)</text>
        <dbReference type="Rhea" id="RHEA:14513"/>
        <dbReference type="Rhea" id="RHEA-COMP:9674"/>
        <dbReference type="Rhea" id="RHEA-COMP:9677"/>
        <dbReference type="ChEBI" id="CHEBI:15377"/>
        <dbReference type="ChEBI" id="CHEBI:15378"/>
        <dbReference type="ChEBI" id="CHEBI:29985"/>
        <dbReference type="ChEBI" id="CHEBI:30616"/>
        <dbReference type="ChEBI" id="CHEBI:43474"/>
        <dbReference type="ChEBI" id="CHEBI:58359"/>
        <dbReference type="ChEBI" id="CHEBI:78515"/>
        <dbReference type="ChEBI" id="CHEBI:78516"/>
        <dbReference type="ChEBI" id="CHEBI:456216"/>
    </reaction>
</comment>
<comment type="subunit">
    <text evidence="1">Heterotrimer of A, B and C subunits.</text>
</comment>
<comment type="similarity">
    <text evidence="1">Belongs to the GatB/GatE family. GatB subfamily.</text>
</comment>
<proteinExistence type="inferred from homology"/>
<accession>B5RRF5</accession>
<dbReference type="EC" id="6.3.5.-" evidence="1"/>
<dbReference type="EMBL" id="CP000993">
    <property type="protein sequence ID" value="ACH94589.1"/>
    <property type="molecule type" value="Genomic_DNA"/>
</dbReference>
<dbReference type="RefSeq" id="WP_012538832.1">
    <property type="nucleotide sequence ID" value="NC_011244.1"/>
</dbReference>
<dbReference type="SMR" id="B5RRF5"/>
<dbReference type="KEGG" id="bre:BRE_344"/>
<dbReference type="HOGENOM" id="CLU_019240_0_0_12"/>
<dbReference type="Proteomes" id="UP000000612">
    <property type="component" value="Chromosome"/>
</dbReference>
<dbReference type="GO" id="GO:0050566">
    <property type="term" value="F:asparaginyl-tRNA synthase (glutamine-hydrolyzing) activity"/>
    <property type="evidence" value="ECO:0007669"/>
    <property type="project" value="RHEA"/>
</dbReference>
<dbReference type="GO" id="GO:0005524">
    <property type="term" value="F:ATP binding"/>
    <property type="evidence" value="ECO:0007669"/>
    <property type="project" value="UniProtKB-KW"/>
</dbReference>
<dbReference type="GO" id="GO:0050567">
    <property type="term" value="F:glutaminyl-tRNA synthase (glutamine-hydrolyzing) activity"/>
    <property type="evidence" value="ECO:0007669"/>
    <property type="project" value="UniProtKB-UniRule"/>
</dbReference>
<dbReference type="GO" id="GO:0070681">
    <property type="term" value="P:glutaminyl-tRNAGln biosynthesis via transamidation"/>
    <property type="evidence" value="ECO:0007669"/>
    <property type="project" value="TreeGrafter"/>
</dbReference>
<dbReference type="GO" id="GO:0006412">
    <property type="term" value="P:translation"/>
    <property type="evidence" value="ECO:0007669"/>
    <property type="project" value="UniProtKB-UniRule"/>
</dbReference>
<dbReference type="FunFam" id="1.10.10.410:FF:000001">
    <property type="entry name" value="Aspartyl/glutamyl-tRNA(Asn/Gln) amidotransferase subunit B"/>
    <property type="match status" value="1"/>
</dbReference>
<dbReference type="Gene3D" id="1.10.10.410">
    <property type="match status" value="1"/>
</dbReference>
<dbReference type="HAMAP" id="MF_00121">
    <property type="entry name" value="GatB"/>
    <property type="match status" value="1"/>
</dbReference>
<dbReference type="InterPro" id="IPR017959">
    <property type="entry name" value="Asn/Gln-tRNA_amidoTrfase_suB/E"/>
</dbReference>
<dbReference type="InterPro" id="IPR006075">
    <property type="entry name" value="Asn/Gln-tRNA_Trfase_suB/E_cat"/>
</dbReference>
<dbReference type="InterPro" id="IPR018027">
    <property type="entry name" value="Asn/Gln_amidotransferase"/>
</dbReference>
<dbReference type="InterPro" id="IPR003789">
    <property type="entry name" value="Asn/Gln_tRNA_amidoTrase-B-like"/>
</dbReference>
<dbReference type="InterPro" id="IPR004413">
    <property type="entry name" value="GatB"/>
</dbReference>
<dbReference type="InterPro" id="IPR023168">
    <property type="entry name" value="GatB_Yqey_C_2"/>
</dbReference>
<dbReference type="InterPro" id="IPR017958">
    <property type="entry name" value="Gln-tRNA_amidoTrfase_suB_CS"/>
</dbReference>
<dbReference type="InterPro" id="IPR014746">
    <property type="entry name" value="Gln_synth/guanido_kin_cat_dom"/>
</dbReference>
<dbReference type="NCBIfam" id="TIGR00133">
    <property type="entry name" value="gatB"/>
    <property type="match status" value="1"/>
</dbReference>
<dbReference type="NCBIfam" id="NF004012">
    <property type="entry name" value="PRK05477.1-2"/>
    <property type="match status" value="1"/>
</dbReference>
<dbReference type="NCBIfam" id="NF004014">
    <property type="entry name" value="PRK05477.1-4"/>
    <property type="match status" value="1"/>
</dbReference>
<dbReference type="PANTHER" id="PTHR11659">
    <property type="entry name" value="GLUTAMYL-TRNA GLN AMIDOTRANSFERASE SUBUNIT B MITOCHONDRIAL AND PROKARYOTIC PET112-RELATED"/>
    <property type="match status" value="1"/>
</dbReference>
<dbReference type="PANTHER" id="PTHR11659:SF0">
    <property type="entry name" value="GLUTAMYL-TRNA(GLN) AMIDOTRANSFERASE SUBUNIT B, MITOCHONDRIAL"/>
    <property type="match status" value="1"/>
</dbReference>
<dbReference type="Pfam" id="PF02934">
    <property type="entry name" value="GatB_N"/>
    <property type="match status" value="1"/>
</dbReference>
<dbReference type="Pfam" id="PF02637">
    <property type="entry name" value="GatB_Yqey"/>
    <property type="match status" value="1"/>
</dbReference>
<dbReference type="SMART" id="SM00845">
    <property type="entry name" value="GatB_Yqey"/>
    <property type="match status" value="1"/>
</dbReference>
<dbReference type="SUPFAM" id="SSF89095">
    <property type="entry name" value="GatB/YqeY motif"/>
    <property type="match status" value="1"/>
</dbReference>
<dbReference type="SUPFAM" id="SSF55931">
    <property type="entry name" value="Glutamine synthetase/guanido kinase"/>
    <property type="match status" value="1"/>
</dbReference>
<dbReference type="PROSITE" id="PS01234">
    <property type="entry name" value="GATB"/>
    <property type="match status" value="1"/>
</dbReference>
<sequence>MEYKLLIGLEVHVQLGLKTKAFCGCKNDFGGIPNSRVCPICLGLPGALPSVNKELVSSAILAGHATNSTIRNIVKFDRKHYAYPDLPKGYQISQNDAPICENGFIFIKTSLGVKRINIARIHMEEDSGKSLHLLSNDNQSYIDFNRAGAPLLEIVSQPDIRSGEEAVAYLNALREIFRYLDLSECSMENGSFRCDVNINLLINENDVNYKTPISEIKNLNSFKSVKLAIDYEESKQKEEWILYRKTLESVGKCTMGFDDKKGITVLQRSKETISDYRYIKDPDLPLIKLESDYIENIKSHRMVELPFDARIRLQEQYGLSDFDVVTLTSDKNLVKYFEEAALTSSEPKKVANWILSEVLSVLNEREIGILDFNLPASYIGELVEFILNGKISGKISKEIFLEMVDRNVSSITIINEKKLEQISDKSFIESIVIEVLNENPKSIELYKKGKSHAVKFMMGQIMRKTSGKVNPVLSNEILMNKLQDV</sequence>
<feature type="chain" id="PRO_1000095188" description="Aspartyl/glutamyl-tRNA(Asn/Gln) amidotransferase subunit B">
    <location>
        <begin position="1"/>
        <end position="485"/>
    </location>
</feature>
<gene>
    <name evidence="1" type="primary">gatB</name>
    <name type="ordered locus">BRE_344</name>
</gene>